<reference key="1">
    <citation type="journal article" date="2005" name="J. Bacteriol.">
        <title>Whole-genome sequence analysis of Pseudomonas syringae pv. phaseolicola 1448A reveals divergence among pathovars in genes involved in virulence and transposition.</title>
        <authorList>
            <person name="Joardar V."/>
            <person name="Lindeberg M."/>
            <person name="Jackson R.W."/>
            <person name="Selengut J."/>
            <person name="Dodson R."/>
            <person name="Brinkac L.M."/>
            <person name="Daugherty S.C."/>
            <person name="DeBoy R.T."/>
            <person name="Durkin A.S."/>
            <person name="Gwinn Giglio M."/>
            <person name="Madupu R."/>
            <person name="Nelson W.C."/>
            <person name="Rosovitz M.J."/>
            <person name="Sullivan S.A."/>
            <person name="Crabtree J."/>
            <person name="Creasy T."/>
            <person name="Davidsen T.M."/>
            <person name="Haft D.H."/>
            <person name="Zafar N."/>
            <person name="Zhou L."/>
            <person name="Halpin R."/>
            <person name="Holley T."/>
            <person name="Khouri H.M."/>
            <person name="Feldblyum T.V."/>
            <person name="White O."/>
            <person name="Fraser C.M."/>
            <person name="Chatterjee A.K."/>
            <person name="Cartinhour S."/>
            <person name="Schneider D."/>
            <person name="Mansfield J.W."/>
            <person name="Collmer A."/>
            <person name="Buell R."/>
        </authorList>
    </citation>
    <scope>NUCLEOTIDE SEQUENCE [LARGE SCALE GENOMIC DNA]</scope>
    <source>
        <strain>1448A / Race 6</strain>
    </source>
</reference>
<accession>Q48LD2</accession>
<comment type="catalytic activity">
    <reaction evidence="1">
        <text>5-amino-1-(5-phospho-D-ribosyl)imidazole-4-carboxylate + L-aspartate + ATP = (2S)-2-[5-amino-1-(5-phospho-beta-D-ribosyl)imidazole-4-carboxamido]succinate + ADP + phosphate + 2 H(+)</text>
        <dbReference type="Rhea" id="RHEA:22628"/>
        <dbReference type="ChEBI" id="CHEBI:15378"/>
        <dbReference type="ChEBI" id="CHEBI:29991"/>
        <dbReference type="ChEBI" id="CHEBI:30616"/>
        <dbReference type="ChEBI" id="CHEBI:43474"/>
        <dbReference type="ChEBI" id="CHEBI:58443"/>
        <dbReference type="ChEBI" id="CHEBI:77657"/>
        <dbReference type="ChEBI" id="CHEBI:456216"/>
        <dbReference type="EC" id="6.3.2.6"/>
    </reaction>
</comment>
<comment type="pathway">
    <text evidence="1">Purine metabolism; IMP biosynthesis via de novo pathway; 5-amino-1-(5-phospho-D-ribosyl)imidazole-4-carboxamide from 5-amino-1-(5-phospho-D-ribosyl)imidazole-4-carboxylate: step 1/2.</text>
</comment>
<comment type="similarity">
    <text evidence="1">Belongs to the SAICAR synthetase family.</text>
</comment>
<keyword id="KW-0067">ATP-binding</keyword>
<keyword id="KW-0436">Ligase</keyword>
<keyword id="KW-0547">Nucleotide-binding</keyword>
<keyword id="KW-0658">Purine biosynthesis</keyword>
<proteinExistence type="inferred from homology"/>
<organism>
    <name type="scientific">Pseudomonas savastanoi pv. phaseolicola (strain 1448A / Race 6)</name>
    <name type="common">Pseudomonas syringae pv. phaseolicola (strain 1448A / Race 6)</name>
    <dbReference type="NCBI Taxonomy" id="264730"/>
    <lineage>
        <taxon>Bacteria</taxon>
        <taxon>Pseudomonadati</taxon>
        <taxon>Pseudomonadota</taxon>
        <taxon>Gammaproteobacteria</taxon>
        <taxon>Pseudomonadales</taxon>
        <taxon>Pseudomonadaceae</taxon>
        <taxon>Pseudomonas</taxon>
    </lineage>
</organism>
<evidence type="ECO:0000255" key="1">
    <source>
        <dbReference type="HAMAP-Rule" id="MF_00137"/>
    </source>
</evidence>
<protein>
    <recommendedName>
        <fullName evidence="1">Phosphoribosylaminoimidazole-succinocarboxamide synthase</fullName>
        <ecNumber evidence="1">6.3.2.6</ecNumber>
    </recommendedName>
    <alternativeName>
        <fullName evidence="1">SAICAR synthetase</fullName>
    </alternativeName>
</protein>
<name>PUR7_PSE14</name>
<gene>
    <name evidence="1" type="primary">purC</name>
    <name type="ordered locus">PSPPH_1540</name>
</gene>
<feature type="chain" id="PRO_1000018754" description="Phosphoribosylaminoimidazole-succinocarboxamide synthase">
    <location>
        <begin position="1"/>
        <end position="236"/>
    </location>
</feature>
<sequence length="236" mass="26965">MEKREELYRGKAKSVYKTDDADRLILLFRNDTSAFDGKRIEQLDRKGMVNNKFNAFIMQKLEEAGVPTQFDKLLGDNECLVKKLDMIPVECVVRNYAAGSLVKRLGIEEGTRLNPYTFELFLKDDAKGDPFINESHVVAFGWGTAEQLVRMKELSIKVNEVLTKLFDDAGLLLVDFKLEFGVFHGEIVLGDEFSPDGCRLWDKDTRKKMDKDRFRQGLGDVIEAYEEVANRLGVPL</sequence>
<dbReference type="EC" id="6.3.2.6" evidence="1"/>
<dbReference type="EMBL" id="CP000058">
    <property type="protein sequence ID" value="AAZ33816.1"/>
    <property type="molecule type" value="Genomic_DNA"/>
</dbReference>
<dbReference type="RefSeq" id="WP_002552594.1">
    <property type="nucleotide sequence ID" value="NC_005773.3"/>
</dbReference>
<dbReference type="SMR" id="Q48LD2"/>
<dbReference type="KEGG" id="psp:PSPPH_1540"/>
<dbReference type="eggNOG" id="COG0152">
    <property type="taxonomic scope" value="Bacteria"/>
</dbReference>
<dbReference type="HOGENOM" id="CLU_061495_2_1_6"/>
<dbReference type="UniPathway" id="UPA00074">
    <property type="reaction ID" value="UER00131"/>
</dbReference>
<dbReference type="Proteomes" id="UP000000551">
    <property type="component" value="Chromosome"/>
</dbReference>
<dbReference type="GO" id="GO:0005829">
    <property type="term" value="C:cytosol"/>
    <property type="evidence" value="ECO:0007669"/>
    <property type="project" value="TreeGrafter"/>
</dbReference>
<dbReference type="GO" id="GO:0005524">
    <property type="term" value="F:ATP binding"/>
    <property type="evidence" value="ECO:0007669"/>
    <property type="project" value="UniProtKB-KW"/>
</dbReference>
<dbReference type="GO" id="GO:0004639">
    <property type="term" value="F:phosphoribosylaminoimidazolesuccinocarboxamide synthase activity"/>
    <property type="evidence" value="ECO:0007669"/>
    <property type="project" value="UniProtKB-UniRule"/>
</dbReference>
<dbReference type="GO" id="GO:0006189">
    <property type="term" value="P:'de novo' IMP biosynthetic process"/>
    <property type="evidence" value="ECO:0007669"/>
    <property type="project" value="UniProtKB-UniRule"/>
</dbReference>
<dbReference type="GO" id="GO:0009236">
    <property type="term" value="P:cobalamin biosynthetic process"/>
    <property type="evidence" value="ECO:0007669"/>
    <property type="project" value="InterPro"/>
</dbReference>
<dbReference type="CDD" id="cd01415">
    <property type="entry name" value="SAICAR_synt_PurC"/>
    <property type="match status" value="1"/>
</dbReference>
<dbReference type="FunFam" id="3.30.200.20:FF:000086">
    <property type="entry name" value="Phosphoribosylaminoimidazole-succinocarboxamide synthase"/>
    <property type="match status" value="1"/>
</dbReference>
<dbReference type="FunFam" id="3.30.470.20:FF:000006">
    <property type="entry name" value="Phosphoribosylaminoimidazole-succinocarboxamide synthase"/>
    <property type="match status" value="1"/>
</dbReference>
<dbReference type="Gene3D" id="3.30.470.20">
    <property type="entry name" value="ATP-grasp fold, B domain"/>
    <property type="match status" value="1"/>
</dbReference>
<dbReference type="Gene3D" id="3.30.200.20">
    <property type="entry name" value="Phosphorylase Kinase, domain 1"/>
    <property type="match status" value="1"/>
</dbReference>
<dbReference type="HAMAP" id="MF_00137">
    <property type="entry name" value="SAICAR_synth"/>
    <property type="match status" value="1"/>
</dbReference>
<dbReference type="InterPro" id="IPR028923">
    <property type="entry name" value="SAICAR_synt/ADE2_N"/>
</dbReference>
<dbReference type="InterPro" id="IPR033934">
    <property type="entry name" value="SAICAR_synt_PurC"/>
</dbReference>
<dbReference type="InterPro" id="IPR001636">
    <property type="entry name" value="SAICAR_synth"/>
</dbReference>
<dbReference type="InterPro" id="IPR050089">
    <property type="entry name" value="SAICAR_synthetase"/>
</dbReference>
<dbReference type="InterPro" id="IPR018236">
    <property type="entry name" value="SAICAR_synthetase_CS"/>
</dbReference>
<dbReference type="NCBIfam" id="TIGR00081">
    <property type="entry name" value="purC"/>
    <property type="match status" value="1"/>
</dbReference>
<dbReference type="PANTHER" id="PTHR43599">
    <property type="entry name" value="MULTIFUNCTIONAL PROTEIN ADE2"/>
    <property type="match status" value="1"/>
</dbReference>
<dbReference type="PANTHER" id="PTHR43599:SF3">
    <property type="entry name" value="SI:DKEY-6E2.2"/>
    <property type="match status" value="1"/>
</dbReference>
<dbReference type="Pfam" id="PF01259">
    <property type="entry name" value="SAICAR_synt"/>
    <property type="match status" value="1"/>
</dbReference>
<dbReference type="SUPFAM" id="SSF56104">
    <property type="entry name" value="SAICAR synthase-like"/>
    <property type="match status" value="1"/>
</dbReference>
<dbReference type="PROSITE" id="PS01057">
    <property type="entry name" value="SAICAR_SYNTHETASE_1"/>
    <property type="match status" value="1"/>
</dbReference>
<dbReference type="PROSITE" id="PS01058">
    <property type="entry name" value="SAICAR_SYNTHETASE_2"/>
    <property type="match status" value="1"/>
</dbReference>